<gene>
    <name evidence="1" type="primary">ppnP</name>
    <name type="ordered locus">HCH_05068</name>
</gene>
<feature type="chain" id="PRO_0000292788" description="Pyrimidine/purine nucleoside phosphorylase">
    <location>
        <begin position="1"/>
        <end position="93"/>
    </location>
</feature>
<name>PPNP_HAHCH</name>
<proteinExistence type="inferred from homology"/>
<organism>
    <name type="scientific">Hahella chejuensis (strain KCTC 2396)</name>
    <dbReference type="NCBI Taxonomy" id="349521"/>
    <lineage>
        <taxon>Bacteria</taxon>
        <taxon>Pseudomonadati</taxon>
        <taxon>Pseudomonadota</taxon>
        <taxon>Gammaproteobacteria</taxon>
        <taxon>Oceanospirillales</taxon>
        <taxon>Hahellaceae</taxon>
        <taxon>Hahella</taxon>
    </lineage>
</organism>
<evidence type="ECO:0000255" key="1">
    <source>
        <dbReference type="HAMAP-Rule" id="MF_01537"/>
    </source>
</evidence>
<evidence type="ECO:0000305" key="2"/>
<reference key="1">
    <citation type="journal article" date="2005" name="Nucleic Acids Res.">
        <title>Genomic blueprint of Hahella chejuensis, a marine microbe producing an algicidal agent.</title>
        <authorList>
            <person name="Jeong H."/>
            <person name="Yim J.H."/>
            <person name="Lee C."/>
            <person name="Choi S.-H."/>
            <person name="Park Y.K."/>
            <person name="Yoon S.H."/>
            <person name="Hur C.-G."/>
            <person name="Kang H.-Y."/>
            <person name="Kim D."/>
            <person name="Lee H.H."/>
            <person name="Park K.H."/>
            <person name="Park S.-H."/>
            <person name="Park H.-S."/>
            <person name="Lee H.K."/>
            <person name="Oh T.K."/>
            <person name="Kim J.F."/>
        </authorList>
    </citation>
    <scope>NUCLEOTIDE SEQUENCE [LARGE SCALE GENOMIC DNA]</scope>
    <source>
        <strain>KCTC 2396</strain>
    </source>
</reference>
<keyword id="KW-0328">Glycosyltransferase</keyword>
<keyword id="KW-1185">Reference proteome</keyword>
<keyword id="KW-0808">Transferase</keyword>
<accession>Q2SC73</accession>
<dbReference type="EC" id="2.4.2.1" evidence="1"/>
<dbReference type="EC" id="2.4.2.2" evidence="1"/>
<dbReference type="EMBL" id="CP000155">
    <property type="protein sequence ID" value="ABC31751.1"/>
    <property type="status" value="ALT_INIT"/>
    <property type="molecule type" value="Genomic_DNA"/>
</dbReference>
<dbReference type="RefSeq" id="WP_041598872.1">
    <property type="nucleotide sequence ID" value="NC_007645.1"/>
</dbReference>
<dbReference type="SMR" id="Q2SC73"/>
<dbReference type="STRING" id="349521.HCH_05068"/>
<dbReference type="KEGG" id="hch:HCH_05068"/>
<dbReference type="eggNOG" id="COG3123">
    <property type="taxonomic scope" value="Bacteria"/>
</dbReference>
<dbReference type="HOGENOM" id="CLU_157874_0_0_6"/>
<dbReference type="OrthoDB" id="9793848at2"/>
<dbReference type="Proteomes" id="UP000000238">
    <property type="component" value="Chromosome"/>
</dbReference>
<dbReference type="GO" id="GO:0005829">
    <property type="term" value="C:cytosol"/>
    <property type="evidence" value="ECO:0007669"/>
    <property type="project" value="TreeGrafter"/>
</dbReference>
<dbReference type="GO" id="GO:0047975">
    <property type="term" value="F:guanosine phosphorylase activity"/>
    <property type="evidence" value="ECO:0007669"/>
    <property type="project" value="UniProtKB-EC"/>
</dbReference>
<dbReference type="GO" id="GO:0004731">
    <property type="term" value="F:purine-nucleoside phosphorylase activity"/>
    <property type="evidence" value="ECO:0007669"/>
    <property type="project" value="UniProtKB-UniRule"/>
</dbReference>
<dbReference type="GO" id="GO:0009032">
    <property type="term" value="F:thymidine phosphorylase activity"/>
    <property type="evidence" value="ECO:0007669"/>
    <property type="project" value="UniProtKB-EC"/>
</dbReference>
<dbReference type="GO" id="GO:0004850">
    <property type="term" value="F:uridine phosphorylase activity"/>
    <property type="evidence" value="ECO:0007669"/>
    <property type="project" value="UniProtKB-EC"/>
</dbReference>
<dbReference type="CDD" id="cd20296">
    <property type="entry name" value="cupin_PpnP-like"/>
    <property type="match status" value="1"/>
</dbReference>
<dbReference type="FunFam" id="2.60.120.10:FF:000016">
    <property type="entry name" value="Pyrimidine/purine nucleoside phosphorylase"/>
    <property type="match status" value="1"/>
</dbReference>
<dbReference type="Gene3D" id="2.60.120.10">
    <property type="entry name" value="Jelly Rolls"/>
    <property type="match status" value="1"/>
</dbReference>
<dbReference type="HAMAP" id="MF_01537">
    <property type="entry name" value="Nucleos_phosphorylase_PpnP"/>
    <property type="match status" value="1"/>
</dbReference>
<dbReference type="InterPro" id="IPR009664">
    <property type="entry name" value="Ppnp"/>
</dbReference>
<dbReference type="InterPro" id="IPR014710">
    <property type="entry name" value="RmlC-like_jellyroll"/>
</dbReference>
<dbReference type="InterPro" id="IPR011051">
    <property type="entry name" value="RmlC_Cupin_sf"/>
</dbReference>
<dbReference type="PANTHER" id="PTHR36540">
    <property type="entry name" value="PYRIMIDINE/PURINE NUCLEOSIDE PHOSPHORYLASE"/>
    <property type="match status" value="1"/>
</dbReference>
<dbReference type="PANTHER" id="PTHR36540:SF1">
    <property type="entry name" value="PYRIMIDINE_PURINE NUCLEOSIDE PHOSPHORYLASE"/>
    <property type="match status" value="1"/>
</dbReference>
<dbReference type="Pfam" id="PF06865">
    <property type="entry name" value="Ppnp"/>
    <property type="match status" value="1"/>
</dbReference>
<dbReference type="SUPFAM" id="SSF51182">
    <property type="entry name" value="RmlC-like cupins"/>
    <property type="match status" value="1"/>
</dbReference>
<protein>
    <recommendedName>
        <fullName evidence="1">Pyrimidine/purine nucleoside phosphorylase</fullName>
        <ecNumber evidence="1">2.4.2.1</ecNumber>
        <ecNumber evidence="1">2.4.2.2</ecNumber>
    </recommendedName>
    <alternativeName>
        <fullName evidence="1">Adenosine phosphorylase</fullName>
    </alternativeName>
    <alternativeName>
        <fullName evidence="1">Cytidine phosphorylase</fullName>
    </alternativeName>
    <alternativeName>
        <fullName evidence="1">Guanosine phosphorylase</fullName>
    </alternativeName>
    <alternativeName>
        <fullName evidence="1">Inosine phosphorylase</fullName>
    </alternativeName>
    <alternativeName>
        <fullName evidence="1">Thymidine phosphorylase</fullName>
    </alternativeName>
    <alternativeName>
        <fullName evidence="1">Uridine phosphorylase</fullName>
    </alternativeName>
    <alternativeName>
        <fullName evidence="1">Xanthosine phosphorylase</fullName>
    </alternativeName>
</protein>
<comment type="function">
    <text evidence="1">Catalyzes the phosphorolysis of diverse nucleosides, yielding D-ribose 1-phosphate and the respective free bases. Can use uridine, adenosine, guanosine, cytidine, thymidine, inosine and xanthosine as substrates. Also catalyzes the reverse reactions.</text>
</comment>
<comment type="catalytic activity">
    <reaction evidence="1">
        <text>a purine D-ribonucleoside + phosphate = a purine nucleobase + alpha-D-ribose 1-phosphate</text>
        <dbReference type="Rhea" id="RHEA:19805"/>
        <dbReference type="ChEBI" id="CHEBI:26386"/>
        <dbReference type="ChEBI" id="CHEBI:43474"/>
        <dbReference type="ChEBI" id="CHEBI:57720"/>
        <dbReference type="ChEBI" id="CHEBI:142355"/>
        <dbReference type="EC" id="2.4.2.1"/>
    </reaction>
</comment>
<comment type="catalytic activity">
    <reaction evidence="1">
        <text>adenosine + phosphate = alpha-D-ribose 1-phosphate + adenine</text>
        <dbReference type="Rhea" id="RHEA:27642"/>
        <dbReference type="ChEBI" id="CHEBI:16335"/>
        <dbReference type="ChEBI" id="CHEBI:16708"/>
        <dbReference type="ChEBI" id="CHEBI:43474"/>
        <dbReference type="ChEBI" id="CHEBI:57720"/>
        <dbReference type="EC" id="2.4.2.1"/>
    </reaction>
</comment>
<comment type="catalytic activity">
    <reaction evidence="1">
        <text>cytidine + phosphate = cytosine + alpha-D-ribose 1-phosphate</text>
        <dbReference type="Rhea" id="RHEA:52540"/>
        <dbReference type="ChEBI" id="CHEBI:16040"/>
        <dbReference type="ChEBI" id="CHEBI:17562"/>
        <dbReference type="ChEBI" id="CHEBI:43474"/>
        <dbReference type="ChEBI" id="CHEBI:57720"/>
        <dbReference type="EC" id="2.4.2.2"/>
    </reaction>
</comment>
<comment type="catalytic activity">
    <reaction evidence="1">
        <text>guanosine + phosphate = alpha-D-ribose 1-phosphate + guanine</text>
        <dbReference type="Rhea" id="RHEA:13233"/>
        <dbReference type="ChEBI" id="CHEBI:16235"/>
        <dbReference type="ChEBI" id="CHEBI:16750"/>
        <dbReference type="ChEBI" id="CHEBI:43474"/>
        <dbReference type="ChEBI" id="CHEBI:57720"/>
        <dbReference type="EC" id="2.4.2.1"/>
    </reaction>
</comment>
<comment type="catalytic activity">
    <reaction evidence="1">
        <text>inosine + phosphate = alpha-D-ribose 1-phosphate + hypoxanthine</text>
        <dbReference type="Rhea" id="RHEA:27646"/>
        <dbReference type="ChEBI" id="CHEBI:17368"/>
        <dbReference type="ChEBI" id="CHEBI:17596"/>
        <dbReference type="ChEBI" id="CHEBI:43474"/>
        <dbReference type="ChEBI" id="CHEBI:57720"/>
        <dbReference type="EC" id="2.4.2.1"/>
    </reaction>
</comment>
<comment type="catalytic activity">
    <reaction evidence="1">
        <text>thymidine + phosphate = 2-deoxy-alpha-D-ribose 1-phosphate + thymine</text>
        <dbReference type="Rhea" id="RHEA:16037"/>
        <dbReference type="ChEBI" id="CHEBI:17748"/>
        <dbReference type="ChEBI" id="CHEBI:17821"/>
        <dbReference type="ChEBI" id="CHEBI:43474"/>
        <dbReference type="ChEBI" id="CHEBI:57259"/>
        <dbReference type="EC" id="2.4.2.2"/>
    </reaction>
</comment>
<comment type="catalytic activity">
    <reaction evidence="1">
        <text>uridine + phosphate = alpha-D-ribose 1-phosphate + uracil</text>
        <dbReference type="Rhea" id="RHEA:24388"/>
        <dbReference type="ChEBI" id="CHEBI:16704"/>
        <dbReference type="ChEBI" id="CHEBI:17568"/>
        <dbReference type="ChEBI" id="CHEBI:43474"/>
        <dbReference type="ChEBI" id="CHEBI:57720"/>
        <dbReference type="EC" id="2.4.2.2"/>
    </reaction>
</comment>
<comment type="catalytic activity">
    <reaction evidence="1">
        <text>xanthosine + phosphate = alpha-D-ribose 1-phosphate + xanthine</text>
        <dbReference type="Rhea" id="RHEA:27638"/>
        <dbReference type="ChEBI" id="CHEBI:17712"/>
        <dbReference type="ChEBI" id="CHEBI:18107"/>
        <dbReference type="ChEBI" id="CHEBI:43474"/>
        <dbReference type="ChEBI" id="CHEBI:57720"/>
        <dbReference type="EC" id="2.4.2.1"/>
    </reaction>
</comment>
<comment type="similarity">
    <text evidence="1">Belongs to the nucleoside phosphorylase PpnP family.</text>
</comment>
<comment type="sequence caution" evidence="2">
    <conflict type="erroneous initiation">
        <sequence resource="EMBL-CDS" id="ABC31751"/>
    </conflict>
</comment>
<sequence length="93" mass="10204">MLKVNEYFNGRVKSIAFQTATLPATVGVMIPGDYEFSTSQHETMTVVSGALSVKLPESESWTRFNAGDRFEIPANATFNLKVAVDTAYLCTYG</sequence>